<comment type="catalytic activity">
    <reaction>
        <text>D-erythro-1-(imidazol-4-yl)glycerol 3-phosphate = 3-(imidazol-4-yl)-2-oxopropyl phosphate + H2O</text>
        <dbReference type="Rhea" id="RHEA:11040"/>
        <dbReference type="ChEBI" id="CHEBI:15377"/>
        <dbReference type="ChEBI" id="CHEBI:57766"/>
        <dbReference type="ChEBI" id="CHEBI:58278"/>
        <dbReference type="EC" id="4.2.1.19"/>
    </reaction>
</comment>
<comment type="pathway">
    <text>Amino-acid biosynthesis; L-histidine biosynthesis; L-histidine from 5-phospho-alpha-D-ribose 1-diphosphate: step 6/9.</text>
</comment>
<comment type="similarity">
    <text evidence="2">Belongs to the imidazoleglycerol-phosphate dehydratase family.</text>
</comment>
<name>HIS7_MAUHU</name>
<reference key="1">
    <citation type="journal article" date="2012" name="J. Microbiol. Biotechnol.">
        <title>Cloning and functional verification of the Candida milleri HIS3 gene encoding imidazoleglycerol phosphate dehydratase.</title>
        <authorList>
            <person name="Park E.H."/>
            <person name="Kwun S.Y."/>
            <person name="Han S.A."/>
            <person name="Lee J.S."/>
            <person name="Kim M.D."/>
        </authorList>
    </citation>
    <scope>NUCLEOTIDE SEQUENCE [GENOMIC DNA]</scope>
    <scope>CHARACTERIZATION</scope>
    <source>
        <strain>CBS 8195 / DBVPG 6754 / NCYC 2448</strain>
    </source>
</reference>
<protein>
    <recommendedName>
        <fullName>Imidazoleglycerol-phosphate dehydratase</fullName>
        <shortName>IGPD</shortName>
        <ecNumber>4.2.1.19</ecNumber>
    </recommendedName>
</protein>
<evidence type="ECO:0000256" key="1">
    <source>
        <dbReference type="SAM" id="MobiDB-lite"/>
    </source>
</evidence>
<evidence type="ECO:0000305" key="2"/>
<gene>
    <name type="primary">HIS3</name>
</gene>
<organism>
    <name type="scientific">Maudiozyma humilis</name>
    <name type="common">Sour dough yeast</name>
    <name type="synonym">Kazachstania humilis</name>
    <dbReference type="NCBI Taxonomy" id="51915"/>
    <lineage>
        <taxon>Eukaryota</taxon>
        <taxon>Fungi</taxon>
        <taxon>Dikarya</taxon>
        <taxon>Ascomycota</taxon>
        <taxon>Saccharomycotina</taxon>
        <taxon>Saccharomycetes</taxon>
        <taxon>Saccharomycetales</taxon>
        <taxon>Saccharomycetaceae</taxon>
        <taxon>Maudiozyma</taxon>
    </lineage>
</organism>
<keyword id="KW-0028">Amino-acid biosynthesis</keyword>
<keyword id="KW-0368">Histidine biosynthesis</keyword>
<keyword id="KW-0456">Lyase</keyword>
<sequence>MTSRTAQVSRITNETKIQISISLTGGPIERPQPSLFASEKGANTAGPDDASQTTASQTIDIHTGVGFLDHMIHALAKHAGWSLIVECIGDLHIDDHHTTEDCGIALGEAFKEALGAVRGIKRFGSGFAPLDEALSRAVVDISNRPLAVIELGLKRERIGDLSCEMIPHFLESFAEAARITLHVDCLRGFNDHHRSESAFKALAVAIREAISSNGTNDVPSTKGVLM</sequence>
<proteinExistence type="evidence at protein level"/>
<feature type="chain" id="PRO_0000423022" description="Imidazoleglycerol-phosphate dehydratase">
    <location>
        <begin position="1"/>
        <end position="226"/>
    </location>
</feature>
<feature type="region of interest" description="Disordered" evidence="1">
    <location>
        <begin position="23"/>
        <end position="55"/>
    </location>
</feature>
<dbReference type="EC" id="4.2.1.19"/>
<dbReference type="EMBL" id="JQ228452">
    <property type="protein sequence ID" value="AFD62576.1"/>
    <property type="molecule type" value="Genomic_DNA"/>
</dbReference>
<dbReference type="SMR" id="H9C4A4"/>
<dbReference type="BRENDA" id="4.2.1.19">
    <property type="organism ID" value="8583"/>
</dbReference>
<dbReference type="UniPathway" id="UPA00031">
    <property type="reaction ID" value="UER00011"/>
</dbReference>
<dbReference type="GO" id="GO:0004424">
    <property type="term" value="F:imidazoleglycerol-phosphate dehydratase activity"/>
    <property type="evidence" value="ECO:0007669"/>
    <property type="project" value="UniProtKB-EC"/>
</dbReference>
<dbReference type="GO" id="GO:0000105">
    <property type="term" value="P:L-histidine biosynthetic process"/>
    <property type="evidence" value="ECO:0007669"/>
    <property type="project" value="UniProtKB-UniPathway"/>
</dbReference>
<dbReference type="CDD" id="cd07914">
    <property type="entry name" value="IGPD"/>
    <property type="match status" value="1"/>
</dbReference>
<dbReference type="FunFam" id="3.30.230.40:FF:000005">
    <property type="entry name" value="Imidazoleglycerol-phosphate dehydratase"/>
    <property type="match status" value="1"/>
</dbReference>
<dbReference type="FunFam" id="3.30.230.40:FF:000001">
    <property type="entry name" value="Imidazoleglycerol-phosphate dehydratase HisB"/>
    <property type="match status" value="1"/>
</dbReference>
<dbReference type="Gene3D" id="3.30.230.40">
    <property type="entry name" value="Imidazole glycerol phosphate dehydratase, domain 1"/>
    <property type="match status" value="2"/>
</dbReference>
<dbReference type="HAMAP" id="MF_00076">
    <property type="entry name" value="HisB"/>
    <property type="match status" value="1"/>
</dbReference>
<dbReference type="InterPro" id="IPR038494">
    <property type="entry name" value="IGPD_sf"/>
</dbReference>
<dbReference type="InterPro" id="IPR000807">
    <property type="entry name" value="ImidazoleglycerolP_deHydtase"/>
</dbReference>
<dbReference type="InterPro" id="IPR020565">
    <property type="entry name" value="ImidazoleglycerP_deHydtase_CS"/>
</dbReference>
<dbReference type="InterPro" id="IPR020568">
    <property type="entry name" value="Ribosomal_Su5_D2-typ_SF"/>
</dbReference>
<dbReference type="NCBIfam" id="NF002114">
    <property type="entry name" value="PRK00951.2-4"/>
    <property type="match status" value="1"/>
</dbReference>
<dbReference type="PANTHER" id="PTHR23133:SF2">
    <property type="entry name" value="IMIDAZOLEGLYCEROL-PHOSPHATE DEHYDRATASE"/>
    <property type="match status" value="1"/>
</dbReference>
<dbReference type="PANTHER" id="PTHR23133">
    <property type="entry name" value="IMIDAZOLEGLYCEROL-PHOSPHATE DEHYDRATASE HIS7"/>
    <property type="match status" value="1"/>
</dbReference>
<dbReference type="Pfam" id="PF00475">
    <property type="entry name" value="IGPD"/>
    <property type="match status" value="1"/>
</dbReference>
<dbReference type="SUPFAM" id="SSF54211">
    <property type="entry name" value="Ribosomal protein S5 domain 2-like"/>
    <property type="match status" value="2"/>
</dbReference>
<dbReference type="PROSITE" id="PS00954">
    <property type="entry name" value="IGP_DEHYDRATASE_1"/>
    <property type="match status" value="1"/>
</dbReference>
<dbReference type="PROSITE" id="PS00955">
    <property type="entry name" value="IGP_DEHYDRATASE_2"/>
    <property type="match status" value="1"/>
</dbReference>
<accession>H9C4A4</accession>